<comment type="function">
    <text evidence="1">Necessary for the introduction of cis unsaturation into fatty acids. Catalyzes the dehydration of (3R)-3-hydroxydecanoyl-ACP to E-(2)-decenoyl-ACP and then its isomerization to Z-(3)-decenoyl-ACP. Can catalyze the dehydratase reaction for beta-hydroxyacyl-ACPs with saturated chain lengths up to 16:0, being most active on intermediate chain length.</text>
</comment>
<comment type="catalytic activity">
    <reaction evidence="1">
        <text>a (3R)-hydroxyacyl-[ACP] = a (2E)-enoyl-[ACP] + H2O</text>
        <dbReference type="Rhea" id="RHEA:13097"/>
        <dbReference type="Rhea" id="RHEA-COMP:9925"/>
        <dbReference type="Rhea" id="RHEA-COMP:9945"/>
        <dbReference type="ChEBI" id="CHEBI:15377"/>
        <dbReference type="ChEBI" id="CHEBI:78784"/>
        <dbReference type="ChEBI" id="CHEBI:78827"/>
        <dbReference type="EC" id="4.2.1.59"/>
    </reaction>
</comment>
<comment type="catalytic activity">
    <reaction evidence="1">
        <text>(3R)-hydroxydecanoyl-[ACP] = (2E)-decenoyl-[ACP] + H2O</text>
        <dbReference type="Rhea" id="RHEA:41860"/>
        <dbReference type="Rhea" id="RHEA-COMP:9638"/>
        <dbReference type="Rhea" id="RHEA-COMP:9639"/>
        <dbReference type="ChEBI" id="CHEBI:15377"/>
        <dbReference type="ChEBI" id="CHEBI:78466"/>
        <dbReference type="ChEBI" id="CHEBI:78467"/>
    </reaction>
</comment>
<comment type="catalytic activity">
    <reaction evidence="1">
        <text>(2E)-decenoyl-[ACP] = (3Z)-decenoyl-[ACP]</text>
        <dbReference type="Rhea" id="RHEA:23568"/>
        <dbReference type="Rhea" id="RHEA-COMP:9639"/>
        <dbReference type="Rhea" id="RHEA-COMP:9927"/>
        <dbReference type="ChEBI" id="CHEBI:78467"/>
        <dbReference type="ChEBI" id="CHEBI:78798"/>
        <dbReference type="EC" id="5.3.3.14"/>
    </reaction>
</comment>
<comment type="pathway">
    <text evidence="1">Lipid metabolism; fatty acid biosynthesis.</text>
</comment>
<comment type="subunit">
    <text evidence="1">Homodimer.</text>
</comment>
<comment type="subcellular location">
    <subcellularLocation>
        <location evidence="1">Cytoplasm</location>
    </subcellularLocation>
</comment>
<comment type="similarity">
    <text evidence="1">Belongs to the thioester dehydratase family. FabA subfamily.</text>
</comment>
<feature type="chain" id="PRO_1000201216" description="3-hydroxydecanoyl-[acyl-carrier-protein] dehydratase">
    <location>
        <begin position="1"/>
        <end position="171"/>
    </location>
</feature>
<feature type="active site" evidence="1">
    <location>
        <position position="70"/>
    </location>
</feature>
<accession>A4Y5X9</accession>
<dbReference type="EC" id="4.2.1.59" evidence="1"/>
<dbReference type="EC" id="5.3.3.14" evidence="1"/>
<dbReference type="EMBL" id="CP000681">
    <property type="protein sequence ID" value="ABP75362.1"/>
    <property type="molecule type" value="Genomic_DNA"/>
</dbReference>
<dbReference type="SMR" id="A4Y5X9"/>
<dbReference type="STRING" id="319224.Sputcn32_1637"/>
<dbReference type="KEGG" id="spc:Sputcn32_1637"/>
<dbReference type="eggNOG" id="COG0764">
    <property type="taxonomic scope" value="Bacteria"/>
</dbReference>
<dbReference type="HOGENOM" id="CLU_097925_0_0_6"/>
<dbReference type="UniPathway" id="UPA00094"/>
<dbReference type="GO" id="GO:0005737">
    <property type="term" value="C:cytoplasm"/>
    <property type="evidence" value="ECO:0007669"/>
    <property type="project" value="UniProtKB-SubCell"/>
</dbReference>
<dbReference type="GO" id="GO:0019171">
    <property type="term" value="F:(3R)-hydroxyacyl-[acyl-carrier-protein] dehydratase activity"/>
    <property type="evidence" value="ECO:0007669"/>
    <property type="project" value="UniProtKB-UniRule"/>
</dbReference>
<dbReference type="GO" id="GO:0034017">
    <property type="term" value="F:trans-2-decenoyl-acyl-carrier-protein isomerase activity"/>
    <property type="evidence" value="ECO:0007669"/>
    <property type="project" value="UniProtKB-UniRule"/>
</dbReference>
<dbReference type="GO" id="GO:0006636">
    <property type="term" value="P:unsaturated fatty acid biosynthetic process"/>
    <property type="evidence" value="ECO:0007669"/>
    <property type="project" value="UniProtKB-UniRule"/>
</dbReference>
<dbReference type="CDD" id="cd01287">
    <property type="entry name" value="FabA"/>
    <property type="match status" value="1"/>
</dbReference>
<dbReference type="Gene3D" id="3.10.129.10">
    <property type="entry name" value="Hotdog Thioesterase"/>
    <property type="match status" value="1"/>
</dbReference>
<dbReference type="HAMAP" id="MF_00405">
    <property type="entry name" value="FabA"/>
    <property type="match status" value="1"/>
</dbReference>
<dbReference type="InterPro" id="IPR010083">
    <property type="entry name" value="FabA"/>
</dbReference>
<dbReference type="InterPro" id="IPR013114">
    <property type="entry name" value="FabA_FabZ"/>
</dbReference>
<dbReference type="InterPro" id="IPR029069">
    <property type="entry name" value="HotDog_dom_sf"/>
</dbReference>
<dbReference type="NCBIfam" id="TIGR01749">
    <property type="entry name" value="fabA"/>
    <property type="match status" value="1"/>
</dbReference>
<dbReference type="NCBIfam" id="NF003509">
    <property type="entry name" value="PRK05174.1"/>
    <property type="match status" value="1"/>
</dbReference>
<dbReference type="PANTHER" id="PTHR30272">
    <property type="entry name" value="3-HYDROXYACYL-[ACYL-CARRIER-PROTEIN] DEHYDRATASE"/>
    <property type="match status" value="1"/>
</dbReference>
<dbReference type="PANTHER" id="PTHR30272:SF8">
    <property type="entry name" value="3-HYDROXYDECANOYL-[ACYL-CARRIER-PROTEIN] DEHYDRATASE"/>
    <property type="match status" value="1"/>
</dbReference>
<dbReference type="Pfam" id="PF07977">
    <property type="entry name" value="FabA"/>
    <property type="match status" value="1"/>
</dbReference>
<dbReference type="SUPFAM" id="SSF54637">
    <property type="entry name" value="Thioesterase/thiol ester dehydrase-isomerase"/>
    <property type="match status" value="1"/>
</dbReference>
<proteinExistence type="inferred from homology"/>
<keyword id="KW-0963">Cytoplasm</keyword>
<keyword id="KW-0275">Fatty acid biosynthesis</keyword>
<keyword id="KW-0276">Fatty acid metabolism</keyword>
<keyword id="KW-0413">Isomerase</keyword>
<keyword id="KW-0444">Lipid biosynthesis</keyword>
<keyword id="KW-0443">Lipid metabolism</keyword>
<keyword id="KW-0456">Lyase</keyword>
<name>FABA_SHEPC</name>
<protein>
    <recommendedName>
        <fullName evidence="1">3-hydroxydecanoyl-[acyl-carrier-protein] dehydratase</fullName>
        <ecNumber evidence="1">4.2.1.59</ecNumber>
    </recommendedName>
    <alternativeName>
        <fullName evidence="1">3-hydroxyacyl-[acyl-carrier-protein] dehydratase FabA</fullName>
    </alternativeName>
    <alternativeName>
        <fullName evidence="1">Beta-hydroxydecanoyl thioester dehydrase</fullName>
    </alternativeName>
    <alternativeName>
        <fullName evidence="1">Trans-2-decenoyl-[acyl-carrier-protein] isomerase</fullName>
        <ecNumber evidence="1">5.3.3.14</ecNumber>
    </alternativeName>
</protein>
<sequence>MNKANSFNKEELIACGHGKLFGPNSPRLPVDNMLMIDRIVTINDNGGEFGKGEIVAELDINPELWFFDCHFISDPVMPGCLGLDAMWQLVGFYLGWEGAEGKGRALGVGEVKFTGQVLPGAKKVTYKLNIKRTIHRKLVMGIADAILEVDGRQIYSATDLKVGVFSDTSTF</sequence>
<gene>
    <name evidence="1" type="primary">fabA</name>
    <name type="ordered locus">Sputcn32_1637</name>
</gene>
<reference key="1">
    <citation type="submission" date="2007-04" db="EMBL/GenBank/DDBJ databases">
        <title>Complete sequence of Shewanella putrefaciens CN-32.</title>
        <authorList>
            <consortium name="US DOE Joint Genome Institute"/>
            <person name="Copeland A."/>
            <person name="Lucas S."/>
            <person name="Lapidus A."/>
            <person name="Barry K."/>
            <person name="Detter J.C."/>
            <person name="Glavina del Rio T."/>
            <person name="Hammon N."/>
            <person name="Israni S."/>
            <person name="Dalin E."/>
            <person name="Tice H."/>
            <person name="Pitluck S."/>
            <person name="Chain P."/>
            <person name="Malfatti S."/>
            <person name="Shin M."/>
            <person name="Vergez L."/>
            <person name="Schmutz J."/>
            <person name="Larimer F."/>
            <person name="Land M."/>
            <person name="Hauser L."/>
            <person name="Kyrpides N."/>
            <person name="Mikhailova N."/>
            <person name="Romine M.F."/>
            <person name="Fredrickson J."/>
            <person name="Tiedje J."/>
            <person name="Richardson P."/>
        </authorList>
    </citation>
    <scope>NUCLEOTIDE SEQUENCE [LARGE SCALE GENOMIC DNA]</scope>
    <source>
        <strain>CN-32 / ATCC BAA-453</strain>
    </source>
</reference>
<organism>
    <name type="scientific">Shewanella putrefaciens (strain CN-32 / ATCC BAA-453)</name>
    <dbReference type="NCBI Taxonomy" id="319224"/>
    <lineage>
        <taxon>Bacteria</taxon>
        <taxon>Pseudomonadati</taxon>
        <taxon>Pseudomonadota</taxon>
        <taxon>Gammaproteobacteria</taxon>
        <taxon>Alteromonadales</taxon>
        <taxon>Shewanellaceae</taxon>
        <taxon>Shewanella</taxon>
    </lineage>
</organism>
<evidence type="ECO:0000255" key="1">
    <source>
        <dbReference type="HAMAP-Rule" id="MF_00405"/>
    </source>
</evidence>